<accession>Q9JZW0</accession>
<keyword id="KW-0067">ATP-binding</keyword>
<keyword id="KW-0997">Cell inner membrane</keyword>
<keyword id="KW-1003">Cell membrane</keyword>
<keyword id="KW-0472">Membrane</keyword>
<keyword id="KW-0547">Nucleotide-binding</keyword>
<keyword id="KW-1185">Reference proteome</keyword>
<keyword id="KW-0764">Sulfate transport</keyword>
<keyword id="KW-1278">Translocase</keyword>
<keyword id="KW-0813">Transport</keyword>
<protein>
    <recommendedName>
        <fullName evidence="1">Sulfate/thiosulfate import ATP-binding protein CysA</fullName>
        <ecNumber evidence="1">7.3.2.3</ecNumber>
    </recommendedName>
    <alternativeName>
        <fullName evidence="1">Sulfate-transporting ATPase</fullName>
    </alternativeName>
</protein>
<gene>
    <name evidence="1" type="primary">cysA</name>
    <name type="ordered locus">NMB0879</name>
</gene>
<feature type="chain" id="PRO_0000092278" description="Sulfate/thiosulfate import ATP-binding protein CysA">
    <location>
        <begin position="1"/>
        <end position="357"/>
    </location>
</feature>
<feature type="domain" description="ABC transporter" evidence="1">
    <location>
        <begin position="3"/>
        <end position="237"/>
    </location>
</feature>
<feature type="binding site" evidence="1">
    <location>
        <begin position="35"/>
        <end position="42"/>
    </location>
    <ligand>
        <name>ATP</name>
        <dbReference type="ChEBI" id="CHEBI:30616"/>
    </ligand>
</feature>
<dbReference type="EC" id="7.3.2.3" evidence="1"/>
<dbReference type="EMBL" id="AE002098">
    <property type="protein sequence ID" value="AAF41290.1"/>
    <property type="molecule type" value="Genomic_DNA"/>
</dbReference>
<dbReference type="PIR" id="B81147">
    <property type="entry name" value="B81147"/>
</dbReference>
<dbReference type="RefSeq" id="NP_273920.1">
    <property type="nucleotide sequence ID" value="NC_003112.2"/>
</dbReference>
<dbReference type="RefSeq" id="WP_002225369.1">
    <property type="nucleotide sequence ID" value="NC_003112.2"/>
</dbReference>
<dbReference type="SMR" id="Q9JZW0"/>
<dbReference type="FunCoup" id="Q9JZW0">
    <property type="interactions" value="158"/>
</dbReference>
<dbReference type="STRING" id="122586.NMB0879"/>
<dbReference type="PaxDb" id="122586-NMB0879"/>
<dbReference type="KEGG" id="nme:NMB0879"/>
<dbReference type="PATRIC" id="fig|122586.8.peg.1095"/>
<dbReference type="HOGENOM" id="CLU_000604_1_1_4"/>
<dbReference type="InParanoid" id="Q9JZW0"/>
<dbReference type="OrthoDB" id="5298774at2"/>
<dbReference type="Proteomes" id="UP000000425">
    <property type="component" value="Chromosome"/>
</dbReference>
<dbReference type="GO" id="GO:0043190">
    <property type="term" value="C:ATP-binding cassette (ABC) transporter complex"/>
    <property type="evidence" value="ECO:0007669"/>
    <property type="project" value="InterPro"/>
</dbReference>
<dbReference type="GO" id="GO:0015419">
    <property type="term" value="F:ABC-type sulfate transporter activity"/>
    <property type="evidence" value="ECO:0007669"/>
    <property type="project" value="InterPro"/>
</dbReference>
<dbReference type="GO" id="GO:0102025">
    <property type="term" value="F:ABC-type thiosulfate transporter activity"/>
    <property type="evidence" value="ECO:0007669"/>
    <property type="project" value="RHEA"/>
</dbReference>
<dbReference type="GO" id="GO:0005524">
    <property type="term" value="F:ATP binding"/>
    <property type="evidence" value="ECO:0007669"/>
    <property type="project" value="UniProtKB-KW"/>
</dbReference>
<dbReference type="GO" id="GO:0016887">
    <property type="term" value="F:ATP hydrolysis activity"/>
    <property type="evidence" value="ECO:0007669"/>
    <property type="project" value="InterPro"/>
</dbReference>
<dbReference type="CDD" id="cd03296">
    <property type="entry name" value="ABC_CysA_sulfate_importer"/>
    <property type="match status" value="1"/>
</dbReference>
<dbReference type="FunFam" id="3.40.50.300:FF:000227">
    <property type="entry name" value="Sulfate/thiosulfate import ATP-binding protein CysA"/>
    <property type="match status" value="1"/>
</dbReference>
<dbReference type="Gene3D" id="3.40.50.300">
    <property type="entry name" value="P-loop containing nucleotide triphosphate hydrolases"/>
    <property type="match status" value="1"/>
</dbReference>
<dbReference type="InterPro" id="IPR003593">
    <property type="entry name" value="AAA+_ATPase"/>
</dbReference>
<dbReference type="InterPro" id="IPR050093">
    <property type="entry name" value="ABC_SmlMolc_Importer"/>
</dbReference>
<dbReference type="InterPro" id="IPR003439">
    <property type="entry name" value="ABC_transporter-like_ATP-bd"/>
</dbReference>
<dbReference type="InterPro" id="IPR017871">
    <property type="entry name" value="ABC_transporter-like_CS"/>
</dbReference>
<dbReference type="InterPro" id="IPR041193">
    <property type="entry name" value="CysA_C"/>
</dbReference>
<dbReference type="InterPro" id="IPR008995">
    <property type="entry name" value="Mo/tungstate-bd_C_term_dom"/>
</dbReference>
<dbReference type="InterPro" id="IPR027417">
    <property type="entry name" value="P-loop_NTPase"/>
</dbReference>
<dbReference type="InterPro" id="IPR005666">
    <property type="entry name" value="Sulph_transpt1"/>
</dbReference>
<dbReference type="NCBIfam" id="TIGR00968">
    <property type="entry name" value="3a0106s01"/>
    <property type="match status" value="1"/>
</dbReference>
<dbReference type="PANTHER" id="PTHR42781">
    <property type="entry name" value="SPERMIDINE/PUTRESCINE IMPORT ATP-BINDING PROTEIN POTA"/>
    <property type="match status" value="1"/>
</dbReference>
<dbReference type="PANTHER" id="PTHR42781:SF4">
    <property type="entry name" value="SPERMIDINE_PUTRESCINE IMPORT ATP-BINDING PROTEIN POTA"/>
    <property type="match status" value="1"/>
</dbReference>
<dbReference type="Pfam" id="PF00005">
    <property type="entry name" value="ABC_tran"/>
    <property type="match status" value="1"/>
</dbReference>
<dbReference type="Pfam" id="PF17850">
    <property type="entry name" value="CysA_C_terminal"/>
    <property type="match status" value="1"/>
</dbReference>
<dbReference type="SMART" id="SM00382">
    <property type="entry name" value="AAA"/>
    <property type="match status" value="1"/>
</dbReference>
<dbReference type="SUPFAM" id="SSF50331">
    <property type="entry name" value="MOP-like"/>
    <property type="match status" value="1"/>
</dbReference>
<dbReference type="SUPFAM" id="SSF52540">
    <property type="entry name" value="P-loop containing nucleoside triphosphate hydrolases"/>
    <property type="match status" value="1"/>
</dbReference>
<dbReference type="PROSITE" id="PS00211">
    <property type="entry name" value="ABC_TRANSPORTER_1"/>
    <property type="match status" value="1"/>
</dbReference>
<dbReference type="PROSITE" id="PS50893">
    <property type="entry name" value="ABC_TRANSPORTER_2"/>
    <property type="match status" value="1"/>
</dbReference>
<dbReference type="PROSITE" id="PS51237">
    <property type="entry name" value="CYSA"/>
    <property type="match status" value="1"/>
</dbReference>
<organism>
    <name type="scientific">Neisseria meningitidis serogroup B (strain ATCC BAA-335 / MC58)</name>
    <dbReference type="NCBI Taxonomy" id="122586"/>
    <lineage>
        <taxon>Bacteria</taxon>
        <taxon>Pseudomonadati</taxon>
        <taxon>Pseudomonadota</taxon>
        <taxon>Betaproteobacteria</taxon>
        <taxon>Neisseriales</taxon>
        <taxon>Neisseriaceae</taxon>
        <taxon>Neisseria</taxon>
    </lineage>
</organism>
<name>CYSA_NEIMB</name>
<evidence type="ECO:0000255" key="1">
    <source>
        <dbReference type="HAMAP-Rule" id="MF_01701"/>
    </source>
</evidence>
<comment type="function">
    <text evidence="1">Part of the ABC transporter complex CysAWTP involved in sulfate/thiosulfate import. Responsible for energy coupling to the transport system.</text>
</comment>
<comment type="catalytic activity">
    <reaction evidence="1">
        <text>sulfate(out) + ATP + H2O = sulfate(in) + ADP + phosphate + H(+)</text>
        <dbReference type="Rhea" id="RHEA:10192"/>
        <dbReference type="ChEBI" id="CHEBI:15377"/>
        <dbReference type="ChEBI" id="CHEBI:15378"/>
        <dbReference type="ChEBI" id="CHEBI:16189"/>
        <dbReference type="ChEBI" id="CHEBI:30616"/>
        <dbReference type="ChEBI" id="CHEBI:43474"/>
        <dbReference type="ChEBI" id="CHEBI:456216"/>
        <dbReference type="EC" id="7.3.2.3"/>
    </reaction>
</comment>
<comment type="catalytic activity">
    <reaction evidence="1">
        <text>thiosulfate(out) + ATP + H2O = thiosulfate(in) + ADP + phosphate + H(+)</text>
        <dbReference type="Rhea" id="RHEA:29871"/>
        <dbReference type="ChEBI" id="CHEBI:15377"/>
        <dbReference type="ChEBI" id="CHEBI:15378"/>
        <dbReference type="ChEBI" id="CHEBI:30616"/>
        <dbReference type="ChEBI" id="CHEBI:33542"/>
        <dbReference type="ChEBI" id="CHEBI:43474"/>
        <dbReference type="ChEBI" id="CHEBI:456216"/>
        <dbReference type="EC" id="7.3.2.3"/>
    </reaction>
</comment>
<comment type="subunit">
    <text evidence="1">The complex is composed of two ATP-binding proteins (CysA), two transmembrane proteins (CysT and CysW) and a solute-binding protein (CysP).</text>
</comment>
<comment type="subcellular location">
    <subcellularLocation>
        <location evidence="1">Cell inner membrane</location>
        <topology evidence="1">Peripheral membrane protein</topology>
    </subcellularLocation>
</comment>
<comment type="similarity">
    <text evidence="1">Belongs to the ABC transporter superfamily. Sulfate/tungstate importer (TC 3.A.1.6) family.</text>
</comment>
<sequence>MSITIQNLNKHFGNFHALKNINLNVPTGKLVSLLGPSGCGKTTLLRIIAGLENADGGNILFDGQDVTAKHVRERKVGFVFQHYALFRHMNVFDNVAFGLTVLPKSERPSKGQIRAKVEELLKLVQLSHLAKSYPHQLSGGQRQRIALARALAVEPKLLLLDEPFGALDAKVRKELRTWLRDIHHNLGVTSILVTHDQEEALEVSDEIVVMNHGKIEQTGSAEAIYRKPENAFVTEFLGETDAFEGRIEKGFWHYNGFAWKLDAQYKWQEQTATGYIRPHEWQIAAEHETPMICAEIEKIHAVGALTHILVKHDKQDVHITLAGSDAARYPIAEGKELKLIPKQVYVFSQNELIEYSI</sequence>
<proteinExistence type="inferred from homology"/>
<reference key="1">
    <citation type="journal article" date="2000" name="Science">
        <title>Complete genome sequence of Neisseria meningitidis serogroup B strain MC58.</title>
        <authorList>
            <person name="Tettelin H."/>
            <person name="Saunders N.J."/>
            <person name="Heidelberg J.F."/>
            <person name="Jeffries A.C."/>
            <person name="Nelson K.E."/>
            <person name="Eisen J.A."/>
            <person name="Ketchum K.A."/>
            <person name="Hood D.W."/>
            <person name="Peden J.F."/>
            <person name="Dodson R.J."/>
            <person name="Nelson W.C."/>
            <person name="Gwinn M.L."/>
            <person name="DeBoy R.T."/>
            <person name="Peterson J.D."/>
            <person name="Hickey E.K."/>
            <person name="Haft D.H."/>
            <person name="Salzberg S.L."/>
            <person name="White O."/>
            <person name="Fleischmann R.D."/>
            <person name="Dougherty B.A."/>
            <person name="Mason T.M."/>
            <person name="Ciecko A."/>
            <person name="Parksey D.S."/>
            <person name="Blair E."/>
            <person name="Cittone H."/>
            <person name="Clark E.B."/>
            <person name="Cotton M.D."/>
            <person name="Utterback T.R."/>
            <person name="Khouri H.M."/>
            <person name="Qin H."/>
            <person name="Vamathevan J.J."/>
            <person name="Gill J."/>
            <person name="Scarlato V."/>
            <person name="Masignani V."/>
            <person name="Pizza M."/>
            <person name="Grandi G."/>
            <person name="Sun L."/>
            <person name="Smith H.O."/>
            <person name="Fraser C.M."/>
            <person name="Moxon E.R."/>
            <person name="Rappuoli R."/>
            <person name="Venter J.C."/>
        </authorList>
    </citation>
    <scope>NUCLEOTIDE SEQUENCE [LARGE SCALE GENOMIC DNA]</scope>
    <source>
        <strain>ATCC BAA-335 / MC58</strain>
    </source>
</reference>